<feature type="chain" id="PRO_0000335608" description="Acetylglutamate kinase">
    <location>
        <begin position="1"/>
        <end position="301"/>
    </location>
</feature>
<feature type="binding site" evidence="1">
    <location>
        <begin position="72"/>
        <end position="73"/>
    </location>
    <ligand>
        <name>substrate</name>
    </ligand>
</feature>
<feature type="binding site" evidence="1">
    <location>
        <position position="94"/>
    </location>
    <ligand>
        <name>substrate</name>
    </ligand>
</feature>
<feature type="binding site" evidence="1">
    <location>
        <position position="199"/>
    </location>
    <ligand>
        <name>substrate</name>
    </ligand>
</feature>
<feature type="site" description="Transition state stabilizer" evidence="1">
    <location>
        <position position="37"/>
    </location>
</feature>
<feature type="site" description="Transition state stabilizer" evidence="1">
    <location>
        <position position="259"/>
    </location>
</feature>
<name>ARGB_AZOC5</name>
<accession>A8IPV3</accession>
<dbReference type="EC" id="2.7.2.8" evidence="1"/>
<dbReference type="EMBL" id="AP009384">
    <property type="protein sequence ID" value="BAF86699.1"/>
    <property type="status" value="ALT_INIT"/>
    <property type="molecule type" value="Genomic_DNA"/>
</dbReference>
<dbReference type="RefSeq" id="WP_043878847.1">
    <property type="nucleotide sequence ID" value="NC_009937.1"/>
</dbReference>
<dbReference type="SMR" id="A8IPV3"/>
<dbReference type="STRING" id="438753.AZC_0701"/>
<dbReference type="KEGG" id="azc:AZC_0701"/>
<dbReference type="eggNOG" id="COG0548">
    <property type="taxonomic scope" value="Bacteria"/>
</dbReference>
<dbReference type="HOGENOM" id="CLU_053680_0_1_5"/>
<dbReference type="UniPathway" id="UPA00068">
    <property type="reaction ID" value="UER00107"/>
</dbReference>
<dbReference type="Proteomes" id="UP000000270">
    <property type="component" value="Chromosome"/>
</dbReference>
<dbReference type="GO" id="GO:0005737">
    <property type="term" value="C:cytoplasm"/>
    <property type="evidence" value="ECO:0007669"/>
    <property type="project" value="UniProtKB-SubCell"/>
</dbReference>
<dbReference type="GO" id="GO:0003991">
    <property type="term" value="F:acetylglutamate kinase activity"/>
    <property type="evidence" value="ECO:0007669"/>
    <property type="project" value="UniProtKB-UniRule"/>
</dbReference>
<dbReference type="GO" id="GO:0005524">
    <property type="term" value="F:ATP binding"/>
    <property type="evidence" value="ECO:0007669"/>
    <property type="project" value="UniProtKB-UniRule"/>
</dbReference>
<dbReference type="GO" id="GO:0042450">
    <property type="term" value="P:arginine biosynthetic process via ornithine"/>
    <property type="evidence" value="ECO:0007669"/>
    <property type="project" value="UniProtKB-UniRule"/>
</dbReference>
<dbReference type="GO" id="GO:0006526">
    <property type="term" value="P:L-arginine biosynthetic process"/>
    <property type="evidence" value="ECO:0007669"/>
    <property type="project" value="UniProtKB-UniPathway"/>
</dbReference>
<dbReference type="CDD" id="cd04250">
    <property type="entry name" value="AAK_NAGK-C"/>
    <property type="match status" value="1"/>
</dbReference>
<dbReference type="FunFam" id="3.40.1160.10:FF:000004">
    <property type="entry name" value="Acetylglutamate kinase"/>
    <property type="match status" value="1"/>
</dbReference>
<dbReference type="Gene3D" id="3.40.1160.10">
    <property type="entry name" value="Acetylglutamate kinase-like"/>
    <property type="match status" value="1"/>
</dbReference>
<dbReference type="HAMAP" id="MF_00082">
    <property type="entry name" value="ArgB"/>
    <property type="match status" value="1"/>
</dbReference>
<dbReference type="InterPro" id="IPR036393">
    <property type="entry name" value="AceGlu_kinase-like_sf"/>
</dbReference>
<dbReference type="InterPro" id="IPR004662">
    <property type="entry name" value="AcgluKinase_fam"/>
</dbReference>
<dbReference type="InterPro" id="IPR037528">
    <property type="entry name" value="ArgB"/>
</dbReference>
<dbReference type="InterPro" id="IPR001048">
    <property type="entry name" value="Asp/Glu/Uridylate_kinase"/>
</dbReference>
<dbReference type="InterPro" id="IPR001057">
    <property type="entry name" value="Glu/AcGlu_kinase"/>
</dbReference>
<dbReference type="InterPro" id="IPR041727">
    <property type="entry name" value="NAGK-C"/>
</dbReference>
<dbReference type="NCBIfam" id="TIGR00761">
    <property type="entry name" value="argB"/>
    <property type="match status" value="1"/>
</dbReference>
<dbReference type="PANTHER" id="PTHR23342">
    <property type="entry name" value="N-ACETYLGLUTAMATE SYNTHASE"/>
    <property type="match status" value="1"/>
</dbReference>
<dbReference type="PANTHER" id="PTHR23342:SF0">
    <property type="entry name" value="N-ACETYLGLUTAMATE SYNTHASE, MITOCHONDRIAL"/>
    <property type="match status" value="1"/>
</dbReference>
<dbReference type="Pfam" id="PF00696">
    <property type="entry name" value="AA_kinase"/>
    <property type="match status" value="1"/>
</dbReference>
<dbReference type="PIRSF" id="PIRSF000728">
    <property type="entry name" value="NAGK"/>
    <property type="match status" value="1"/>
</dbReference>
<dbReference type="PRINTS" id="PR00474">
    <property type="entry name" value="GLU5KINASE"/>
</dbReference>
<dbReference type="SUPFAM" id="SSF53633">
    <property type="entry name" value="Carbamate kinase-like"/>
    <property type="match status" value="1"/>
</dbReference>
<gene>
    <name evidence="1" type="primary">argB</name>
    <name type="ordered locus">AZC_0701</name>
</gene>
<proteinExistence type="inferred from homology"/>
<keyword id="KW-0028">Amino-acid biosynthesis</keyword>
<keyword id="KW-0055">Arginine biosynthesis</keyword>
<keyword id="KW-0067">ATP-binding</keyword>
<keyword id="KW-0963">Cytoplasm</keyword>
<keyword id="KW-0418">Kinase</keyword>
<keyword id="KW-0547">Nucleotide-binding</keyword>
<keyword id="KW-1185">Reference proteome</keyword>
<keyword id="KW-0808">Transferase</keyword>
<comment type="function">
    <text evidence="1">Catalyzes the ATP-dependent phosphorylation of N-acetyl-L-glutamate.</text>
</comment>
<comment type="catalytic activity">
    <reaction evidence="1">
        <text>N-acetyl-L-glutamate + ATP = N-acetyl-L-glutamyl 5-phosphate + ADP</text>
        <dbReference type="Rhea" id="RHEA:14629"/>
        <dbReference type="ChEBI" id="CHEBI:30616"/>
        <dbReference type="ChEBI" id="CHEBI:44337"/>
        <dbReference type="ChEBI" id="CHEBI:57936"/>
        <dbReference type="ChEBI" id="CHEBI:456216"/>
        <dbReference type="EC" id="2.7.2.8"/>
    </reaction>
</comment>
<comment type="pathway">
    <text evidence="1">Amino-acid biosynthesis; L-arginine biosynthesis; N(2)-acetyl-L-ornithine from L-glutamate: step 2/4.</text>
</comment>
<comment type="subcellular location">
    <subcellularLocation>
        <location evidence="1">Cytoplasm</location>
    </subcellularLocation>
</comment>
<comment type="similarity">
    <text evidence="1">Belongs to the acetylglutamate kinase family. ArgB subfamily.</text>
</comment>
<comment type="sequence caution" evidence="2">
    <conflict type="erroneous initiation">
        <sequence resource="EMBL-CDS" id="BAF86699"/>
    </conflict>
</comment>
<organism>
    <name type="scientific">Azorhizobium caulinodans (strain ATCC 43989 / DSM 5975 / JCM 20966 / LMG 6465 / NBRC 14845 / NCIMB 13405 / ORS 571)</name>
    <dbReference type="NCBI Taxonomy" id="438753"/>
    <lineage>
        <taxon>Bacteria</taxon>
        <taxon>Pseudomonadati</taxon>
        <taxon>Pseudomonadota</taxon>
        <taxon>Alphaproteobacteria</taxon>
        <taxon>Hyphomicrobiales</taxon>
        <taxon>Xanthobacteraceae</taxon>
        <taxon>Azorhizobium</taxon>
    </lineage>
</organism>
<protein>
    <recommendedName>
        <fullName evidence="1">Acetylglutamate kinase</fullName>
        <ecNumber evidence="1">2.7.2.8</ecNumber>
    </recommendedName>
    <alternativeName>
        <fullName evidence="1">N-acetyl-L-glutamate 5-phosphotransferase</fullName>
    </alternativeName>
    <alternativeName>
        <fullName evidence="1">NAG kinase</fullName>
        <shortName evidence="1">NAGK</shortName>
    </alternativeName>
</protein>
<evidence type="ECO:0000255" key="1">
    <source>
        <dbReference type="HAMAP-Rule" id="MF_00082"/>
    </source>
</evidence>
<evidence type="ECO:0000305" key="2"/>
<sequence>MSASIADNVAEAQLQAEVLTKALPHMQRYDDAIVVVKYGGHAMGNDELARHFAQDIVLLEQSGVNPVVVHGGGPQIGAMLEKLGIKSEFAAGLRITDKATIEIVEMVLAGSINKQIVGFINEAGGKAIGLCGKDGNMVRARKATRTIVDPQSHIEEVVDLGFVGEPDTVDTMVLDQILGRELIPVLAPVASAVDGGTYNVNADTFAGAIAGALGAKRLLLLTDVPGVLDKNKQLIPRLTIDECRALIADGTVSGGMIPKVETCIYALEKGVEGVVIMDGKLPHSVLLELLTDHGIGTLITR</sequence>
<reference key="1">
    <citation type="submission" date="2007-04" db="EMBL/GenBank/DDBJ databases">
        <title>Complete genome sequence of the nitrogen-fixing bacterium Azorhizobium caulinodans ORS571.</title>
        <authorList>
            <person name="Lee K.B."/>
            <person name="Backer P.D."/>
            <person name="Aono T."/>
            <person name="Liu C.T."/>
            <person name="Suzuki S."/>
            <person name="Suzuki T."/>
            <person name="Kaneko T."/>
            <person name="Yamada M."/>
            <person name="Tabata S."/>
            <person name="Kupfer D.M."/>
            <person name="Najar F.Z."/>
            <person name="Wiley G.B."/>
            <person name="Roe B."/>
            <person name="Binnewies T."/>
            <person name="Ussery D."/>
            <person name="Vereecke D."/>
            <person name="Gevers D."/>
            <person name="Holsters M."/>
            <person name="Oyaizu H."/>
        </authorList>
    </citation>
    <scope>NUCLEOTIDE SEQUENCE [LARGE SCALE GENOMIC DNA]</scope>
    <source>
        <strain>ATCC 43989 / DSM 5975 / JCM 20966 / LMG 6465 / NBRC 14845 / NCIMB 13405 / ORS 571</strain>
    </source>
</reference>